<evidence type="ECO:0000255" key="1">
    <source>
        <dbReference type="HAMAP-Rule" id="MF_00484"/>
    </source>
</evidence>
<reference key="1">
    <citation type="journal article" date="2003" name="DNA Res.">
        <title>Complete genome structure of Gloeobacter violaceus PCC 7421, a cyanobacterium that lacks thylakoids.</title>
        <authorList>
            <person name="Nakamura Y."/>
            <person name="Kaneko T."/>
            <person name="Sato S."/>
            <person name="Mimuro M."/>
            <person name="Miyashita H."/>
            <person name="Tsuchiya T."/>
            <person name="Sasamoto S."/>
            <person name="Watanabe A."/>
            <person name="Kawashima K."/>
            <person name="Kishida Y."/>
            <person name="Kiyokawa C."/>
            <person name="Kohara M."/>
            <person name="Matsumoto M."/>
            <person name="Matsuno A."/>
            <person name="Nakazaki N."/>
            <person name="Shimpo S."/>
            <person name="Takeuchi C."/>
            <person name="Yamada M."/>
            <person name="Tabata S."/>
        </authorList>
    </citation>
    <scope>NUCLEOTIDE SEQUENCE [LARGE SCALE GENOMIC DNA]</scope>
    <source>
        <strain>ATCC 29082 / PCC 7421</strain>
    </source>
</reference>
<proteinExistence type="inferred from homology"/>
<dbReference type="EC" id="2.4.1.21" evidence="1"/>
<dbReference type="EMBL" id="BA000045">
    <property type="protein sequence ID" value="BAC88873.1"/>
    <property type="molecule type" value="Genomic_DNA"/>
</dbReference>
<dbReference type="RefSeq" id="NP_923878.1">
    <property type="nucleotide sequence ID" value="NC_005125.1"/>
</dbReference>
<dbReference type="RefSeq" id="WP_011140934.1">
    <property type="nucleotide sequence ID" value="NC_005125.1"/>
</dbReference>
<dbReference type="SMR" id="Q7NM37"/>
<dbReference type="STRING" id="251221.gene:10758410"/>
<dbReference type="CAZy" id="GT5">
    <property type="family name" value="Glycosyltransferase Family 5"/>
</dbReference>
<dbReference type="EnsemblBacteria" id="BAC88873">
    <property type="protein sequence ID" value="BAC88873"/>
    <property type="gene ID" value="BAC88873"/>
</dbReference>
<dbReference type="KEGG" id="gvi:glr0932"/>
<dbReference type="PATRIC" id="fig|251221.4.peg.951"/>
<dbReference type="eggNOG" id="COG0297">
    <property type="taxonomic scope" value="Bacteria"/>
</dbReference>
<dbReference type="HOGENOM" id="CLU_009583_18_2_3"/>
<dbReference type="InParanoid" id="Q7NM37"/>
<dbReference type="OrthoDB" id="9808590at2"/>
<dbReference type="PhylomeDB" id="Q7NM37"/>
<dbReference type="UniPathway" id="UPA00164"/>
<dbReference type="Proteomes" id="UP000000557">
    <property type="component" value="Chromosome"/>
</dbReference>
<dbReference type="GO" id="GO:0009011">
    <property type="term" value="F:alpha-1,4-glucan glucosyltransferase (ADP-glucose donor) activity"/>
    <property type="evidence" value="ECO:0007669"/>
    <property type="project" value="UniProtKB-UniRule"/>
</dbReference>
<dbReference type="GO" id="GO:0004373">
    <property type="term" value="F:alpha-1,4-glucan glucosyltransferase (UDP-glucose donor) activity"/>
    <property type="evidence" value="ECO:0007669"/>
    <property type="project" value="InterPro"/>
</dbReference>
<dbReference type="GO" id="GO:0005978">
    <property type="term" value="P:glycogen biosynthetic process"/>
    <property type="evidence" value="ECO:0007669"/>
    <property type="project" value="UniProtKB-UniRule"/>
</dbReference>
<dbReference type="CDD" id="cd03791">
    <property type="entry name" value="GT5_Glycogen_synthase_DULL1-like"/>
    <property type="match status" value="1"/>
</dbReference>
<dbReference type="Gene3D" id="3.40.50.2000">
    <property type="entry name" value="Glycogen Phosphorylase B"/>
    <property type="match status" value="2"/>
</dbReference>
<dbReference type="HAMAP" id="MF_00484">
    <property type="entry name" value="Glycogen_synth"/>
    <property type="match status" value="1"/>
</dbReference>
<dbReference type="InterPro" id="IPR001296">
    <property type="entry name" value="Glyco_trans_1"/>
</dbReference>
<dbReference type="InterPro" id="IPR011835">
    <property type="entry name" value="GS/SS"/>
</dbReference>
<dbReference type="InterPro" id="IPR013534">
    <property type="entry name" value="Starch_synth_cat_dom"/>
</dbReference>
<dbReference type="NCBIfam" id="TIGR02095">
    <property type="entry name" value="glgA"/>
    <property type="match status" value="1"/>
</dbReference>
<dbReference type="NCBIfam" id="NF001900">
    <property type="entry name" value="PRK00654.1-3"/>
    <property type="match status" value="1"/>
</dbReference>
<dbReference type="PANTHER" id="PTHR45825:SF11">
    <property type="entry name" value="ALPHA AMYLASE DOMAIN-CONTAINING PROTEIN"/>
    <property type="match status" value="1"/>
</dbReference>
<dbReference type="PANTHER" id="PTHR45825">
    <property type="entry name" value="GRANULE-BOUND STARCH SYNTHASE 1, CHLOROPLASTIC/AMYLOPLASTIC"/>
    <property type="match status" value="1"/>
</dbReference>
<dbReference type="Pfam" id="PF08323">
    <property type="entry name" value="Glyco_transf_5"/>
    <property type="match status" value="1"/>
</dbReference>
<dbReference type="Pfam" id="PF00534">
    <property type="entry name" value="Glycos_transf_1"/>
    <property type="match status" value="1"/>
</dbReference>
<dbReference type="SUPFAM" id="SSF53756">
    <property type="entry name" value="UDP-Glycosyltransferase/glycogen phosphorylase"/>
    <property type="match status" value="1"/>
</dbReference>
<gene>
    <name evidence="1" type="primary">glgA</name>
    <name type="ordered locus">glr0932</name>
</gene>
<accession>Q7NM37</accession>
<comment type="function">
    <text evidence="1">Synthesizes alpha-1,4-glucan chains using ADP-glucose.</text>
</comment>
<comment type="catalytic activity">
    <reaction evidence="1">
        <text>[(1-&gt;4)-alpha-D-glucosyl](n) + ADP-alpha-D-glucose = [(1-&gt;4)-alpha-D-glucosyl](n+1) + ADP + H(+)</text>
        <dbReference type="Rhea" id="RHEA:18189"/>
        <dbReference type="Rhea" id="RHEA-COMP:9584"/>
        <dbReference type="Rhea" id="RHEA-COMP:9587"/>
        <dbReference type="ChEBI" id="CHEBI:15378"/>
        <dbReference type="ChEBI" id="CHEBI:15444"/>
        <dbReference type="ChEBI" id="CHEBI:57498"/>
        <dbReference type="ChEBI" id="CHEBI:456216"/>
        <dbReference type="EC" id="2.4.1.21"/>
    </reaction>
</comment>
<comment type="pathway">
    <text evidence="1">Glycan biosynthesis; glycogen biosynthesis.</text>
</comment>
<comment type="similarity">
    <text evidence="1">Belongs to the glycosyltransferase 1 family. Bacterial/plant glycogen synthase subfamily.</text>
</comment>
<organism>
    <name type="scientific">Gloeobacter violaceus (strain ATCC 29082 / PCC 7421)</name>
    <dbReference type="NCBI Taxonomy" id="251221"/>
    <lineage>
        <taxon>Bacteria</taxon>
        <taxon>Bacillati</taxon>
        <taxon>Cyanobacteriota</taxon>
        <taxon>Cyanophyceae</taxon>
        <taxon>Gloeobacterales</taxon>
        <taxon>Gloeobacteraceae</taxon>
        <taxon>Gloeobacter</taxon>
    </lineage>
</organism>
<protein>
    <recommendedName>
        <fullName evidence="1">Glycogen synthase</fullName>
        <ecNumber evidence="1">2.4.1.21</ecNumber>
    </recommendedName>
    <alternativeName>
        <fullName evidence="1">Starch [bacterial glycogen] synthase</fullName>
    </alternativeName>
</protein>
<name>GLGA_GLOVI</name>
<keyword id="KW-0320">Glycogen biosynthesis</keyword>
<keyword id="KW-0328">Glycosyltransferase</keyword>
<keyword id="KW-1185">Reference proteome</keyword>
<keyword id="KW-0808">Transferase</keyword>
<sequence>MKVLFAAAECAPLAKVGGMADVVGSLPLALAEMGLDVRIILPYYGFLGELPKSEQPVWTGGAMFQQVEIYEARLPGSDIPLYLVGHPAFANERIYGFEDEAWRFTLFSRTVAEFLWRGGWDPQVLHCHDWHTGLLPLWMRSMPVMTVFTIHNLAYQGPPLPYFRAFVDVPYDTGAWNPMVAGIIHSDAITAVSPTYAREICTPEYGERLDGLLRGQGNRLTGILNGINTKALDPATDKHLTVNYDTTSLDRRVENKLALQREFGFEVSADRLLVGIVSRLVDQKGFDLLAPLWDNWMHTSGAQLVVLGSGDPFYEFLFRSAAERYPDRIKAVLSYNVPIAQRIYGGADLFLMPSRFEPCGIGQMIALRYGAVPLVRKTGGLADTVFFHNPLDEKGNGFLFDRYDPANLLAMLYRAEEAFRYKDYWRRLQLRGMEADLSWRASAHQYADLYKSLIARLG</sequence>
<feature type="chain" id="PRO_0000188619" description="Glycogen synthase">
    <location>
        <begin position="1"/>
        <end position="458"/>
    </location>
</feature>
<feature type="binding site" evidence="1">
    <location>
        <position position="15"/>
    </location>
    <ligand>
        <name>ADP-alpha-D-glucose</name>
        <dbReference type="ChEBI" id="CHEBI:57498"/>
    </ligand>
</feature>